<feature type="signal peptide" evidence="3">
    <location>
        <begin position="1"/>
        <end position="20"/>
    </location>
</feature>
<feature type="propeptide" id="PRO_0000457561" evidence="3 11">
    <location>
        <begin position="21"/>
        <end position="192"/>
    </location>
</feature>
<feature type="chain" id="PRO_5002110257" description="Zinc metalloproteinase-disintegrin-like protein F1" evidence="11">
    <location>
        <begin position="193"/>
        <end position="614"/>
    </location>
</feature>
<feature type="domain" description="Peptidase M12B" evidence="5">
    <location>
        <begin position="202"/>
        <end position="398"/>
    </location>
</feature>
<feature type="domain" description="Disintegrin" evidence="4">
    <location>
        <begin position="406"/>
        <end position="492"/>
    </location>
</feature>
<feature type="short sequence motif" description="Cys-switch; controls maturation" evidence="11">
    <location>
        <begin position="167"/>
        <end position="173"/>
    </location>
</feature>
<feature type="short sequence motif" description="Metal-binding" evidence="11">
    <location>
        <begin position="338"/>
        <end position="349"/>
    </location>
</feature>
<feature type="short sequence motif" description="D/ECD-tripeptide" evidence="11">
    <location>
        <begin position="470"/>
        <end position="472"/>
    </location>
</feature>
<feature type="active site" description="Proton acceptor" evidence="5 7 10">
    <location>
        <position position="339"/>
    </location>
</feature>
<feature type="binding site" evidence="2 5 7">
    <location>
        <position position="338"/>
    </location>
    <ligand>
        <name>Zn(2+)</name>
        <dbReference type="ChEBI" id="CHEBI:29105"/>
        <note>catalytic</note>
    </ligand>
</feature>
<feature type="binding site" evidence="2 5 7">
    <location>
        <position position="342"/>
    </location>
    <ligand>
        <name>Zn(2+)</name>
        <dbReference type="ChEBI" id="CHEBI:29105"/>
        <note>catalytic</note>
    </ligand>
</feature>
<feature type="binding site" evidence="2 5">
    <location>
        <position position="348"/>
    </location>
    <ligand>
        <name>Zn(2+)</name>
        <dbReference type="ChEBI" id="CHEBI:29105"/>
        <note>catalytic</note>
    </ligand>
</feature>
<feature type="binding site" evidence="2">
    <location>
        <position position="408"/>
    </location>
    <ligand>
        <name>Ca(2+)</name>
        <dbReference type="ChEBI" id="CHEBI:29108"/>
        <label>1</label>
    </ligand>
</feature>
<feature type="binding site" evidence="2">
    <location>
        <position position="411"/>
    </location>
    <ligand>
        <name>Ca(2+)</name>
        <dbReference type="ChEBI" id="CHEBI:29108"/>
        <label>1</label>
    </ligand>
</feature>
<feature type="binding site" evidence="2">
    <location>
        <position position="415"/>
    </location>
    <ligand>
        <name>Ca(2+)</name>
        <dbReference type="ChEBI" id="CHEBI:29108"/>
        <label>1</label>
    </ligand>
</feature>
<feature type="binding site" evidence="2">
    <location>
        <position position="418"/>
    </location>
    <ligand>
        <name>Ca(2+)</name>
        <dbReference type="ChEBI" id="CHEBI:29108"/>
        <label>1</label>
    </ligand>
</feature>
<feature type="binding site" evidence="2">
    <location>
        <position position="421"/>
    </location>
    <ligand>
        <name>Ca(2+)</name>
        <dbReference type="ChEBI" id="CHEBI:29108"/>
        <label>1</label>
    </ligand>
</feature>
<feature type="binding site" evidence="2">
    <location>
        <position position="472"/>
    </location>
    <ligand>
        <name>Ca(2+)</name>
        <dbReference type="ChEBI" id="CHEBI:29108"/>
        <label>2</label>
    </ligand>
</feature>
<feature type="binding site" evidence="2">
    <location>
        <position position="475"/>
    </location>
    <ligand>
        <name>Ca(2+)</name>
        <dbReference type="ChEBI" id="CHEBI:29108"/>
        <label>2</label>
    </ligand>
</feature>
<feature type="binding site" evidence="2">
    <location>
        <position position="487"/>
    </location>
    <ligand>
        <name>Ca(2+)</name>
        <dbReference type="ChEBI" id="CHEBI:29108"/>
        <label>2</label>
    </ligand>
</feature>
<feature type="modified residue" description="Pyrrolidone carboxylic acid (Glu)" evidence="1">
    <location>
        <position position="193"/>
    </location>
</feature>
<feature type="glycosylation site" description="N-linked (GlcNAc...) asparagine" evidence="2 6">
    <location>
        <position position="221"/>
    </location>
</feature>
<feature type="glycosylation site" description="N-linked (GlcNAc...) asparagine" evidence="6">
    <location>
        <position position="534"/>
    </location>
</feature>
<feature type="disulfide bond" evidence="2 5">
    <location>
        <begin position="313"/>
        <end position="393"/>
    </location>
</feature>
<feature type="disulfide bond" evidence="2 5">
    <location>
        <begin position="353"/>
        <end position="377"/>
    </location>
</feature>
<feature type="disulfide bond" evidence="2 5">
    <location>
        <begin position="355"/>
        <end position="360"/>
    </location>
</feature>
<feature type="disulfide bond" evidence="2">
    <location>
        <begin position="409"/>
        <end position="438"/>
    </location>
</feature>
<feature type="disulfide bond" evidence="2">
    <location>
        <begin position="420"/>
        <end position="433"/>
    </location>
</feature>
<feature type="disulfide bond" evidence="2">
    <location>
        <begin position="422"/>
        <end position="428"/>
    </location>
</feature>
<feature type="disulfide bond" evidence="2">
    <location>
        <begin position="432"/>
        <end position="455"/>
    </location>
</feature>
<feature type="disulfide bond" evidence="2">
    <location>
        <begin position="446"/>
        <end position="452"/>
    </location>
</feature>
<feature type="disulfide bond" evidence="2">
    <location>
        <begin position="451"/>
        <end position="477"/>
    </location>
</feature>
<feature type="disulfide bond" evidence="2 4">
    <location>
        <begin position="464"/>
        <end position="484"/>
    </location>
</feature>
<feature type="disulfide bond" evidence="2">
    <location>
        <begin position="471"/>
        <end position="503"/>
    </location>
</feature>
<feature type="disulfide bond" evidence="2">
    <location>
        <begin position="496"/>
        <end position="508"/>
    </location>
</feature>
<feature type="disulfide bond" evidence="2">
    <location>
        <begin position="515"/>
        <end position="565"/>
    </location>
</feature>
<feature type="disulfide bond" evidence="2">
    <location>
        <begin position="530"/>
        <end position="575"/>
    </location>
</feature>
<feature type="disulfide bond" evidence="2">
    <location>
        <begin position="543"/>
        <end position="553"/>
    </location>
</feature>
<feature type="disulfide bond" evidence="2">
    <location>
        <begin position="560"/>
        <end position="601"/>
    </location>
</feature>
<feature type="disulfide bond" evidence="2">
    <location>
        <begin position="595"/>
        <end position="607"/>
    </location>
</feature>
<name>VMF1_VIPAA</name>
<sequence length="614" mass="68745">MLQVLLVTICLAVFPYQGSSIILESGNVNDYEVVYPQKLTALLKGAIQQPEQKYEDAMQYEFKVNGKPVVLHLEKNKGLFSEDYSETHYSPDGREITTNPPVEDHCYYHGHIQNDAHLTASISACNGLKGHFQLRGETYLIEPLKIPDSEAHAVYKYENVEKEDEGPKKCGVTQTNWKSDEPIKASQFILTPEQRAYMNANKYIKLAIVVDNVMFRKYTGNFTAIRTRIYEIVNTLNLIYTILNIHIALVFLEIWSKGDSINVQSVVDVTLNSFGEWRERDLLNRKRHDNAQLLTGINFNGDTIGFGFVGSMCIPKKSVGIVQDHSKTHLLVATTMAHELGHNLGINHDGDSCTCQANSCIMAAKLSHQPSYQFSDCSINELWMYLISHTPRCILNEPLTTDVVSPAVCGNYVVEEGEECDCGSLWYCRNPCCDAATCKLKPGAECGDGVCCYQCRFVTAGTVCRPARSECDIPEYCSGQSVECPMDHIQKNGKPCLMNHGYCYNGRCPIMIHQCIALWGPGTTVSSDVCFQRNESGQGYSYCRRENNQNIPCAPQDVKCGRLYCKFHNVNTLPCNFKYSDFAPDYGLVDHGTKCGDGKVCNSNRQCVDVNTAY</sequence>
<accession>A0A0B4U9L8</accession>
<dbReference type="EC" id="3.4.24.-" evidence="8"/>
<dbReference type="EMBL" id="KM886926">
    <property type="protein sequence ID" value="AJC52543.1"/>
    <property type="molecule type" value="mRNA"/>
</dbReference>
<dbReference type="SMR" id="A0A0B4U9L8"/>
<dbReference type="MEROPS" id="M12.315"/>
<dbReference type="BRENDA" id="3.4.21.74">
    <property type="organism ID" value="10997"/>
</dbReference>
<dbReference type="BRENDA" id="3.4.24.B34">
    <property type="organism ID" value="10997"/>
</dbReference>
<dbReference type="GO" id="GO:0005576">
    <property type="term" value="C:extracellular region"/>
    <property type="evidence" value="ECO:0000314"/>
    <property type="project" value="UniProtKB"/>
</dbReference>
<dbReference type="GO" id="GO:0043245">
    <property type="term" value="C:extraorganismal space"/>
    <property type="evidence" value="ECO:0000314"/>
    <property type="project" value="UniProtKB"/>
</dbReference>
<dbReference type="GO" id="GO:0005886">
    <property type="term" value="C:plasma membrane"/>
    <property type="evidence" value="ECO:0007669"/>
    <property type="project" value="TreeGrafter"/>
</dbReference>
<dbReference type="GO" id="GO:0004222">
    <property type="term" value="F:metalloendopeptidase activity"/>
    <property type="evidence" value="ECO:0007669"/>
    <property type="project" value="InterPro"/>
</dbReference>
<dbReference type="GO" id="GO:0008237">
    <property type="term" value="F:metallopeptidase activity"/>
    <property type="evidence" value="ECO:0000314"/>
    <property type="project" value="UniProtKB"/>
</dbReference>
<dbReference type="GO" id="GO:0090729">
    <property type="term" value="F:toxin activity"/>
    <property type="evidence" value="ECO:0000314"/>
    <property type="project" value="UniProtKB"/>
</dbReference>
<dbReference type="GO" id="GO:0008270">
    <property type="term" value="F:zinc ion binding"/>
    <property type="evidence" value="ECO:0000250"/>
    <property type="project" value="UniProtKB"/>
</dbReference>
<dbReference type="GO" id="GO:0006508">
    <property type="term" value="P:proteolysis"/>
    <property type="evidence" value="ECO:0007669"/>
    <property type="project" value="UniProtKB-KW"/>
</dbReference>
<dbReference type="GO" id="GO:0035738">
    <property type="term" value="P:venom-mediated perturbation of biological process"/>
    <property type="evidence" value="ECO:0000314"/>
    <property type="project" value="UniProtKB"/>
</dbReference>
<dbReference type="GO" id="GO:0044468">
    <property type="term" value="P:venom-mediated perturbation of blood coagulation"/>
    <property type="evidence" value="ECO:0000314"/>
    <property type="project" value="UniProtKB"/>
</dbReference>
<dbReference type="CDD" id="cd04269">
    <property type="entry name" value="ZnMc_adamalysin_II_like"/>
    <property type="match status" value="1"/>
</dbReference>
<dbReference type="FunFam" id="3.40.390.10:FF:000002">
    <property type="entry name" value="Disintegrin and metalloproteinase domain-containing protein 22"/>
    <property type="match status" value="1"/>
</dbReference>
<dbReference type="FunFam" id="4.10.70.10:FF:000001">
    <property type="entry name" value="Disintegrin and metalloproteinase domain-containing protein 22"/>
    <property type="match status" value="1"/>
</dbReference>
<dbReference type="Gene3D" id="3.40.390.10">
    <property type="entry name" value="Collagenase (Catalytic Domain)"/>
    <property type="match status" value="1"/>
</dbReference>
<dbReference type="Gene3D" id="4.10.70.10">
    <property type="entry name" value="Disintegrin domain"/>
    <property type="match status" value="1"/>
</dbReference>
<dbReference type="InterPro" id="IPR006586">
    <property type="entry name" value="ADAM_Cys-rich"/>
</dbReference>
<dbReference type="InterPro" id="IPR018358">
    <property type="entry name" value="Disintegrin_CS"/>
</dbReference>
<dbReference type="InterPro" id="IPR001762">
    <property type="entry name" value="Disintegrin_dom"/>
</dbReference>
<dbReference type="InterPro" id="IPR036436">
    <property type="entry name" value="Disintegrin_dom_sf"/>
</dbReference>
<dbReference type="InterPro" id="IPR024079">
    <property type="entry name" value="MetalloPept_cat_dom_sf"/>
</dbReference>
<dbReference type="InterPro" id="IPR001590">
    <property type="entry name" value="Peptidase_M12B"/>
</dbReference>
<dbReference type="InterPro" id="IPR002870">
    <property type="entry name" value="Peptidase_M12B_N"/>
</dbReference>
<dbReference type="InterPro" id="IPR034027">
    <property type="entry name" value="Reprolysin_adamalysin"/>
</dbReference>
<dbReference type="PANTHER" id="PTHR11905">
    <property type="entry name" value="ADAM A DISINTEGRIN AND METALLOPROTEASE DOMAIN"/>
    <property type="match status" value="1"/>
</dbReference>
<dbReference type="PANTHER" id="PTHR11905:SF32">
    <property type="entry name" value="DISINTEGRIN AND METALLOPROTEINASE DOMAIN-CONTAINING PROTEIN 28"/>
    <property type="match status" value="1"/>
</dbReference>
<dbReference type="Pfam" id="PF08516">
    <property type="entry name" value="ADAM_CR"/>
    <property type="match status" value="1"/>
</dbReference>
<dbReference type="Pfam" id="PF00200">
    <property type="entry name" value="Disintegrin"/>
    <property type="match status" value="1"/>
</dbReference>
<dbReference type="Pfam" id="PF01562">
    <property type="entry name" value="Pep_M12B_propep"/>
    <property type="match status" value="1"/>
</dbReference>
<dbReference type="Pfam" id="PF01421">
    <property type="entry name" value="Reprolysin"/>
    <property type="match status" value="1"/>
</dbReference>
<dbReference type="PRINTS" id="PR00289">
    <property type="entry name" value="DISINTEGRIN"/>
</dbReference>
<dbReference type="SMART" id="SM00608">
    <property type="entry name" value="ACR"/>
    <property type="match status" value="1"/>
</dbReference>
<dbReference type="SMART" id="SM00050">
    <property type="entry name" value="DISIN"/>
    <property type="match status" value="1"/>
</dbReference>
<dbReference type="SUPFAM" id="SSF57552">
    <property type="entry name" value="Blood coagulation inhibitor (disintegrin)"/>
    <property type="match status" value="1"/>
</dbReference>
<dbReference type="SUPFAM" id="SSF55486">
    <property type="entry name" value="Metalloproteases ('zincins'), catalytic domain"/>
    <property type="match status" value="1"/>
</dbReference>
<dbReference type="PROSITE" id="PS50215">
    <property type="entry name" value="ADAM_MEPRO"/>
    <property type="match status" value="1"/>
</dbReference>
<dbReference type="PROSITE" id="PS00427">
    <property type="entry name" value="DISINTEGRIN_1"/>
    <property type="match status" value="1"/>
</dbReference>
<dbReference type="PROSITE" id="PS50214">
    <property type="entry name" value="DISINTEGRIN_2"/>
    <property type="match status" value="1"/>
</dbReference>
<dbReference type="PROSITE" id="PS00142">
    <property type="entry name" value="ZINC_PROTEASE"/>
    <property type="match status" value="1"/>
</dbReference>
<evidence type="ECO:0000250" key="1">
    <source>
        <dbReference type="UniProtKB" id="P0DM89"/>
    </source>
</evidence>
<evidence type="ECO:0000250" key="2">
    <source>
        <dbReference type="UniProtKB" id="Q9DGB9"/>
    </source>
</evidence>
<evidence type="ECO:0000255" key="3"/>
<evidence type="ECO:0000255" key="4">
    <source>
        <dbReference type="PROSITE-ProRule" id="PRU00068"/>
    </source>
</evidence>
<evidence type="ECO:0000255" key="5">
    <source>
        <dbReference type="PROSITE-ProRule" id="PRU00276"/>
    </source>
</evidence>
<evidence type="ECO:0000255" key="6">
    <source>
        <dbReference type="PROSITE-ProRule" id="PRU00498"/>
    </source>
</evidence>
<evidence type="ECO:0000255" key="7">
    <source>
        <dbReference type="PROSITE-ProRule" id="PRU10095"/>
    </source>
</evidence>
<evidence type="ECO:0000269" key="8">
    <source>
    </source>
</evidence>
<evidence type="ECO:0000303" key="9">
    <source>
    </source>
</evidence>
<evidence type="ECO:0000305" key="10"/>
<evidence type="ECO:0000305" key="11">
    <source>
    </source>
</evidence>
<evidence type="ECO:0000312" key="12">
    <source>
        <dbReference type="EMBL" id="AJC52543.1"/>
    </source>
</evidence>
<comment type="function">
    <text evidence="8">Zinc metalloprotease that has fibrinogenolytic activity. Does not have hemorrhagic activity in rats. Cleaves insulin B chain at '38-Ala-|-Leu-39' and '40-Tyr-|-Leu-41' bonds. Hydrolyzes only partially and weakly isolated extracellular matrix (ECM) bovine fibronectin and basal membrane (BM) protein human collagen IV in vitro. Murine laminin is not hydrolyzed, neither isolated nor in a solubilized BM preparation. Nidogen is hydrolyzed at '350-Ser-|-Phe-351' bond in a solubilized BM preparation. Hydrolyzes plasma proteins involved in blood coagulation in vitro. Has alpha-fibrinogenase activity cleaving human fibrinogen alpha chain at '432-Lys-|-Leu-433' bond, but does not cleave beta or gamma chains. Does not cleave fibrin. Hydrolyzes only partially bovine prothrombin at '200-Ser-|-Gly-201' bond, factor X (FX) heavy chain, and very slowly, FX light chain and plasminogen in vitro, without activating any of them. Has no effect in plasma thrombin generation. Does not inhibit platelet aggregation induced by collagen in vitro. May have a delayed pathological action as an anticoagulant in envenomed patients after they received serotherapy as it is not recognized by the venom antiserum.</text>
</comment>
<comment type="cofactor">
    <cofactor evidence="2">
        <name>Zn(2+)</name>
        <dbReference type="ChEBI" id="CHEBI:29105"/>
    </cofactor>
    <text evidence="2">Binds 1 zinc ion per subunit.</text>
</comment>
<comment type="activity regulation">
    <text evidence="8">The alpha-fibrinogenase activity is inhibited by EDTA, but not by pefabloc.</text>
</comment>
<comment type="subunit">
    <text evidence="8">Monomer.</text>
</comment>
<comment type="subcellular location">
    <subcellularLocation>
        <location evidence="8">Secreted</location>
    </subcellularLocation>
</comment>
<comment type="tissue specificity">
    <text evidence="8">Expressed by the venom gland (at protein level). Expressed by the venom gland.</text>
</comment>
<comment type="PTM">
    <text evidence="8">N-glycosylated.</text>
</comment>
<comment type="PTM">
    <text evidence="8">The N-terminus is blocked.</text>
</comment>
<comment type="similarity">
    <text evidence="9">Belongs to the venom metalloproteinase (M12B) family. P-III subfamily. P-IIIa sub-subfamily.</text>
</comment>
<proteinExistence type="evidence at protein level"/>
<reference evidence="12" key="1">
    <citation type="journal article" date="2014" name="Biochimie">
        <title>Structural and biochemical characterisation of VaF1, a P-IIIa fibrinogenolytic metalloproteinase from Vipera ammodytes ammodytes venom.</title>
        <authorList>
            <person name="Leonardi A."/>
            <person name="Sajevic T."/>
            <person name="Latinovic Z."/>
            <person name="Pungercar J."/>
            <person name="Balija M.L."/>
            <person name="Bakija A.T."/>
            <person name="Vidmar R."/>
            <person name="Halassy B."/>
            <person name="Krizaj I."/>
        </authorList>
    </citation>
    <scope>NUCLEOTIDE SEQUENCE [MRNA]</scope>
    <scope>PROTEIN SEQUENCE OF 196-216; 366-392; 440-456; 508-533; 545-559; 567-594 AND 606-614</scope>
    <scope>FUNCTION</scope>
    <scope>CATALYTIC ACTIVITY</scope>
    <scope>ACTIVITY REGULATION</scope>
    <scope>SUBUNIT</scope>
    <scope>SUBCELLULAR LOCATION</scope>
    <scope>TISSUE SPECIFICITY</scope>
    <scope>GLYCOSYLATION</scope>
    <scope>PTM</scope>
    <scope>IDENTIFICATION BY MASS SPECTROMETRY</scope>
    <scope>MOTIFS</scope>
    <source>
        <tissue evidence="9">Venom</tissue>
        <tissue evidence="9 12">Venom gland</tissue>
    </source>
</reference>
<keyword id="KW-0106">Calcium</keyword>
<keyword id="KW-1217">Cell adhesion impairing toxin</keyword>
<keyword id="KW-0903">Direct protein sequencing</keyword>
<keyword id="KW-1015">Disulfide bond</keyword>
<keyword id="KW-1206">Fibrinogenolytic toxin</keyword>
<keyword id="KW-0325">Glycoprotein</keyword>
<keyword id="KW-1199">Hemostasis impairing toxin</keyword>
<keyword id="KW-0378">Hydrolase</keyword>
<keyword id="KW-0479">Metal-binding</keyword>
<keyword id="KW-0482">Metalloprotease</keyword>
<keyword id="KW-0645">Protease</keyword>
<keyword id="KW-0873">Pyrrolidone carboxylic acid</keyword>
<keyword id="KW-0964">Secreted</keyword>
<keyword id="KW-0732">Signal</keyword>
<keyword id="KW-0800">Toxin</keyword>
<keyword id="KW-0862">Zinc</keyword>
<keyword id="KW-0865">Zymogen</keyword>
<organism evidence="12">
    <name type="scientific">Vipera ammodytes ammodytes</name>
    <name type="common">Western sand viper</name>
    <dbReference type="NCBI Taxonomy" id="8705"/>
    <lineage>
        <taxon>Eukaryota</taxon>
        <taxon>Metazoa</taxon>
        <taxon>Chordata</taxon>
        <taxon>Craniata</taxon>
        <taxon>Vertebrata</taxon>
        <taxon>Euteleostomi</taxon>
        <taxon>Lepidosauria</taxon>
        <taxon>Squamata</taxon>
        <taxon>Bifurcata</taxon>
        <taxon>Unidentata</taxon>
        <taxon>Episquamata</taxon>
        <taxon>Toxicofera</taxon>
        <taxon>Serpentes</taxon>
        <taxon>Colubroidea</taxon>
        <taxon>Viperidae</taxon>
        <taxon>Viperinae</taxon>
        <taxon>Vipera</taxon>
    </lineage>
</organism>
<protein>
    <recommendedName>
        <fullName evidence="9">Zinc metalloproteinase-disintegrin-like protein F1</fullName>
        <ecNumber evidence="8">3.4.24.-</ecNumber>
    </recommendedName>
    <alternativeName>
        <fullName evidence="9">Fibrinogenase 1</fullName>
    </alternativeName>
    <alternativeName>
        <fullName evidence="12">Metalloproteinase F1</fullName>
    </alternativeName>
    <alternativeName>
        <fullName evidence="9">P-IIIa metalloproteinase F1</fullName>
    </alternativeName>
    <alternativeName>
        <fullName evidence="9">Snake venom metalloproteinase</fullName>
        <shortName evidence="9">SVMP</shortName>
    </alternativeName>
    <alternativeName>
        <fullName evidence="9">VaF1</fullName>
    </alternativeName>
</protein>